<dbReference type="EC" id="3.1.2.22" evidence="2"/>
<dbReference type="EMBL" id="BC077395">
    <property type="protein sequence ID" value="AAH77395.1"/>
    <property type="molecule type" value="mRNA"/>
</dbReference>
<dbReference type="EMBL" id="BC078123">
    <property type="protein sequence ID" value="AAH78123.1"/>
    <property type="molecule type" value="mRNA"/>
</dbReference>
<dbReference type="RefSeq" id="NP_001086750.1">
    <property type="nucleotide sequence ID" value="NM_001093281.1"/>
</dbReference>
<dbReference type="RefSeq" id="NP_001087176.1">
    <property type="nucleotide sequence ID" value="NM_001093707.1"/>
</dbReference>
<dbReference type="RefSeq" id="XP_018102696.1">
    <property type="nucleotide sequence ID" value="XM_018247207.1"/>
</dbReference>
<dbReference type="SMR" id="Q6DCC5"/>
<dbReference type="ESTHER" id="xenla-q6dcc5">
    <property type="family name" value="ABHD17-depalmitoylase"/>
</dbReference>
<dbReference type="DNASU" id="446585"/>
<dbReference type="DNASU" id="447065"/>
<dbReference type="GeneID" id="446585"/>
<dbReference type="GeneID" id="447065"/>
<dbReference type="KEGG" id="xla:446585"/>
<dbReference type="KEGG" id="xla:447065"/>
<dbReference type="CTD" id="446585"/>
<dbReference type="CTD" id="447065"/>
<dbReference type="OMA" id="GENIYML"/>
<dbReference type="OrthoDB" id="446723at2759"/>
<dbReference type="Proteomes" id="UP000186698">
    <property type="component" value="Chromosome 1L"/>
</dbReference>
<dbReference type="Proteomes" id="UP000186698">
    <property type="component" value="Chromosome 1S"/>
</dbReference>
<dbReference type="Bgee" id="446585">
    <property type="expression patterns" value="Expressed in blastula and 19 other cell types or tissues"/>
</dbReference>
<dbReference type="GO" id="GO:0043197">
    <property type="term" value="C:dendritic spine"/>
    <property type="evidence" value="ECO:0007669"/>
    <property type="project" value="UniProtKB-SubCell"/>
</dbReference>
<dbReference type="GO" id="GO:0010008">
    <property type="term" value="C:endosome membrane"/>
    <property type="evidence" value="ECO:0000318"/>
    <property type="project" value="GO_Central"/>
</dbReference>
<dbReference type="GO" id="GO:0005886">
    <property type="term" value="C:plasma membrane"/>
    <property type="evidence" value="ECO:0000318"/>
    <property type="project" value="GO_Central"/>
</dbReference>
<dbReference type="GO" id="GO:0098839">
    <property type="term" value="C:postsynaptic density membrane"/>
    <property type="evidence" value="ECO:0007669"/>
    <property type="project" value="UniProtKB-SubCell"/>
</dbReference>
<dbReference type="GO" id="GO:0055038">
    <property type="term" value="C:recycling endosome membrane"/>
    <property type="evidence" value="ECO:0007669"/>
    <property type="project" value="UniProtKB-SubCell"/>
</dbReference>
<dbReference type="GO" id="GO:0008474">
    <property type="term" value="F:palmitoyl-(protein) hydrolase activity"/>
    <property type="evidence" value="ECO:0000318"/>
    <property type="project" value="GO_Central"/>
</dbReference>
<dbReference type="GO" id="GO:0099175">
    <property type="term" value="P:regulation of postsynapse organization"/>
    <property type="evidence" value="ECO:0000318"/>
    <property type="project" value="GO_Central"/>
</dbReference>
<dbReference type="FunFam" id="3.40.50.1820:FF:000008">
    <property type="entry name" value="Alpha/beta hydrolase domain-containing protein 17B"/>
    <property type="match status" value="1"/>
</dbReference>
<dbReference type="Gene3D" id="3.40.50.1820">
    <property type="entry name" value="alpha/beta hydrolase"/>
    <property type="match status" value="1"/>
</dbReference>
<dbReference type="InterPro" id="IPR029058">
    <property type="entry name" value="AB_hydrolase_fold"/>
</dbReference>
<dbReference type="InterPro" id="IPR022742">
    <property type="entry name" value="Hydrolase_4"/>
</dbReference>
<dbReference type="PANTHER" id="PTHR12277">
    <property type="entry name" value="ALPHA/BETA HYDROLASE DOMAIN-CONTAINING PROTEIN"/>
    <property type="match status" value="1"/>
</dbReference>
<dbReference type="PANTHER" id="PTHR12277:SF48">
    <property type="entry name" value="ALPHA_BETA HYDROLASE DOMAIN-CONTAINING PROTEIN 17B"/>
    <property type="match status" value="1"/>
</dbReference>
<dbReference type="Pfam" id="PF12146">
    <property type="entry name" value="Hydrolase_4"/>
    <property type="match status" value="1"/>
</dbReference>
<dbReference type="SUPFAM" id="SSF53474">
    <property type="entry name" value="alpha/beta-Hydrolases"/>
    <property type="match status" value="1"/>
</dbReference>
<comment type="function">
    <text evidence="2 3">Hydrolyzes fatty acids from S-acylated cysteine residues in proteins. Has depalmitoylating activity towards nras.</text>
</comment>
<comment type="catalytic activity">
    <reaction evidence="3">
        <text>S-hexadecanoyl-L-cysteinyl-[protein] + H2O = L-cysteinyl-[protein] + hexadecanoate + H(+)</text>
        <dbReference type="Rhea" id="RHEA:19233"/>
        <dbReference type="Rhea" id="RHEA-COMP:10131"/>
        <dbReference type="Rhea" id="RHEA-COMP:11032"/>
        <dbReference type="ChEBI" id="CHEBI:7896"/>
        <dbReference type="ChEBI" id="CHEBI:15377"/>
        <dbReference type="ChEBI" id="CHEBI:15378"/>
        <dbReference type="ChEBI" id="CHEBI:29950"/>
        <dbReference type="ChEBI" id="CHEBI:74151"/>
        <dbReference type="EC" id="3.1.2.22"/>
    </reaction>
</comment>
<comment type="subcellular location">
    <subcellularLocation>
        <location evidence="3">Cell membrane</location>
        <topology evidence="3">Lipid-anchor</topology>
        <orientation evidence="3">Cytoplasmic side</orientation>
    </subcellularLocation>
    <subcellularLocation>
        <location evidence="3">Recycling endosome membrane</location>
        <topology evidence="3">Lipid-anchor</topology>
        <orientation evidence="3">Cytoplasmic side</orientation>
    </subcellularLocation>
    <subcellularLocation>
        <location evidence="3">Cell projection</location>
        <location evidence="3">Dendritic spine</location>
    </subcellularLocation>
    <subcellularLocation>
        <location evidence="3">Postsynaptic density membrane</location>
    </subcellularLocation>
</comment>
<comment type="PTM">
    <text evidence="3">Palmitoylated on cysteine residues located in a cysteine cluster at the N-terminus which promotes membrane localization.</text>
</comment>
<comment type="similarity">
    <text evidence="5">Belongs to the AB hydrolase superfamily. ABHD17 family.</text>
</comment>
<reference key="1">
    <citation type="submission" date="2004-07" db="EMBL/GenBank/DDBJ databases">
        <authorList>
            <consortium name="NIH - Xenopus Gene Collection (XGC) project"/>
        </authorList>
    </citation>
    <scope>NUCLEOTIDE SEQUENCE [LARGE SCALE MRNA]</scope>
    <source>
        <tissue>Embryo</tissue>
        <tissue>Oocyte</tissue>
    </source>
</reference>
<evidence type="ECO:0000250" key="1">
    <source>
        <dbReference type="UniProtKB" id="O75608"/>
    </source>
</evidence>
<evidence type="ECO:0000250" key="2">
    <source>
        <dbReference type="UniProtKB" id="Q5VST6"/>
    </source>
</evidence>
<evidence type="ECO:0000250" key="3">
    <source>
        <dbReference type="UniProtKB" id="Q7M759"/>
    </source>
</evidence>
<evidence type="ECO:0000250" key="4">
    <source>
        <dbReference type="UniProtKB" id="Q96GS6"/>
    </source>
</evidence>
<evidence type="ECO:0000305" key="5"/>
<organism>
    <name type="scientific">Xenopus laevis</name>
    <name type="common">African clawed frog</name>
    <dbReference type="NCBI Taxonomy" id="8355"/>
    <lineage>
        <taxon>Eukaryota</taxon>
        <taxon>Metazoa</taxon>
        <taxon>Chordata</taxon>
        <taxon>Craniata</taxon>
        <taxon>Vertebrata</taxon>
        <taxon>Euteleostomi</taxon>
        <taxon>Amphibia</taxon>
        <taxon>Batrachia</taxon>
        <taxon>Anura</taxon>
        <taxon>Pipoidea</taxon>
        <taxon>Pipidae</taxon>
        <taxon>Xenopodinae</taxon>
        <taxon>Xenopus</taxon>
        <taxon>Xenopus</taxon>
    </lineage>
</organism>
<feature type="chain" id="PRO_0000281115" description="Alpha/beta hydrolase domain-containing protein 17B">
    <location>
        <begin position="1"/>
        <end position="288"/>
    </location>
</feature>
<feature type="active site" description="Charge relay system" evidence="4">
    <location>
        <position position="170"/>
    </location>
</feature>
<feature type="active site" description="Charge relay system" evidence="1">
    <location>
        <position position="235"/>
    </location>
</feature>
<feature type="active site" description="Charge relay system" evidence="1">
    <location>
        <position position="264"/>
    </location>
</feature>
<feature type="sequence conflict" description="In Ref. 1; AAH77395." evidence="5" ref="1">
    <original>F</original>
    <variation>C</variation>
    <location>
        <position position="69"/>
    </location>
</feature>
<feature type="sequence conflict" description="In Ref. 1; AAH77395." evidence="5" ref="1">
    <original>C</original>
    <variation>S</variation>
    <location>
        <position position="87"/>
    </location>
</feature>
<feature type="sequence conflict" description="In Ref. 1; AAH77395." evidence="5" ref="1">
    <original>I</original>
    <variation>V</variation>
    <location>
        <position position="159"/>
    </location>
</feature>
<feature type="sequence conflict" description="In Ref. 1; AAH77395." evidence="5" ref="1">
    <original>A</original>
    <variation>T</variation>
    <location>
        <position position="282"/>
    </location>
</feature>
<proteinExistence type="evidence at transcript level"/>
<keyword id="KW-1003">Cell membrane</keyword>
<keyword id="KW-0966">Cell projection</keyword>
<keyword id="KW-0967">Endosome</keyword>
<keyword id="KW-0378">Hydrolase</keyword>
<keyword id="KW-0449">Lipoprotein</keyword>
<keyword id="KW-0472">Membrane</keyword>
<keyword id="KW-0564">Palmitate</keyword>
<keyword id="KW-0628">Postsynaptic cell membrane</keyword>
<keyword id="KW-1185">Reference proteome</keyword>
<keyword id="KW-0770">Synapse</keyword>
<gene>
    <name evidence="2" type="primary">abhd17b</name>
</gene>
<accession>Q6DCC5</accession>
<accession>Q6DDV9</accession>
<protein>
    <recommendedName>
        <fullName evidence="5">Alpha/beta hydrolase domain-containing protein 17B</fullName>
        <shortName evidence="2">Abhydrolase domain-containing protein 17B</shortName>
        <ecNumber evidence="2">3.1.2.22</ecNumber>
    </recommendedName>
</protein>
<name>AB17B_XENLA</name>
<sequence length="288" mass="32209">MNNLSFSELCCLFCCPPCPGKIASKLAFLPPDPTYTLICDESGSRWTLHLSERADWQYSSREKDAIECFMTRTSRGNRIACMFVRCCPSAKYTLLFSHGNAVDLGQMSSFYIGLGSRINCNIFSYDYSGYGSSSGKPSEKNLYADIDAAWIALRTRYGIRPEHVIIYGQSIGTVPSVDLAARYESAAVILHSPLTSGMRVAFPDTKKTYCFDAFPNIDKISKITSPVLIIHGTEDEVIDFSHGLALFERCQRPVEPLWVEGAGHNDVELYGQYLERLKQFVAQELVNL</sequence>